<dbReference type="EMBL" id="FM180568">
    <property type="protein sequence ID" value="CAS11107.1"/>
    <property type="molecule type" value="Genomic_DNA"/>
</dbReference>
<dbReference type="RefSeq" id="WP_000135224.1">
    <property type="nucleotide sequence ID" value="NC_011601.1"/>
</dbReference>
<dbReference type="SMR" id="B7UK20"/>
<dbReference type="GeneID" id="93778691"/>
<dbReference type="KEGG" id="ecg:E2348C_3559"/>
<dbReference type="HOGENOM" id="CLU_092403_0_2_6"/>
<dbReference type="Proteomes" id="UP000008205">
    <property type="component" value="Chromosome"/>
</dbReference>
<dbReference type="GO" id="GO:0015935">
    <property type="term" value="C:small ribosomal subunit"/>
    <property type="evidence" value="ECO:0007669"/>
    <property type="project" value="InterPro"/>
</dbReference>
<dbReference type="GO" id="GO:0019843">
    <property type="term" value="F:rRNA binding"/>
    <property type="evidence" value="ECO:0007669"/>
    <property type="project" value="UniProtKB-UniRule"/>
</dbReference>
<dbReference type="GO" id="GO:0003735">
    <property type="term" value="F:structural constituent of ribosome"/>
    <property type="evidence" value="ECO:0007669"/>
    <property type="project" value="InterPro"/>
</dbReference>
<dbReference type="GO" id="GO:0042274">
    <property type="term" value="P:ribosomal small subunit biogenesis"/>
    <property type="evidence" value="ECO:0007669"/>
    <property type="project" value="TreeGrafter"/>
</dbReference>
<dbReference type="GO" id="GO:0006412">
    <property type="term" value="P:translation"/>
    <property type="evidence" value="ECO:0007669"/>
    <property type="project" value="UniProtKB-UniRule"/>
</dbReference>
<dbReference type="CDD" id="cd00165">
    <property type="entry name" value="S4"/>
    <property type="match status" value="1"/>
</dbReference>
<dbReference type="FunFam" id="1.10.1050.10:FF:000001">
    <property type="entry name" value="30S ribosomal protein S4"/>
    <property type="match status" value="1"/>
</dbReference>
<dbReference type="FunFam" id="3.10.290.10:FF:000001">
    <property type="entry name" value="30S ribosomal protein S4"/>
    <property type="match status" value="1"/>
</dbReference>
<dbReference type="Gene3D" id="1.10.1050.10">
    <property type="entry name" value="Ribosomal Protein S4 Delta 41, Chain A, domain 1"/>
    <property type="match status" value="1"/>
</dbReference>
<dbReference type="Gene3D" id="3.10.290.10">
    <property type="entry name" value="RNA-binding S4 domain"/>
    <property type="match status" value="1"/>
</dbReference>
<dbReference type="HAMAP" id="MF_01306_B">
    <property type="entry name" value="Ribosomal_uS4_B"/>
    <property type="match status" value="1"/>
</dbReference>
<dbReference type="InterPro" id="IPR022801">
    <property type="entry name" value="Ribosomal_uS4"/>
</dbReference>
<dbReference type="InterPro" id="IPR005709">
    <property type="entry name" value="Ribosomal_uS4_bac-type"/>
</dbReference>
<dbReference type="InterPro" id="IPR018079">
    <property type="entry name" value="Ribosomal_uS4_CS"/>
</dbReference>
<dbReference type="InterPro" id="IPR001912">
    <property type="entry name" value="Ribosomal_uS4_N"/>
</dbReference>
<dbReference type="InterPro" id="IPR002942">
    <property type="entry name" value="S4_RNA-bd"/>
</dbReference>
<dbReference type="InterPro" id="IPR036986">
    <property type="entry name" value="S4_RNA-bd_sf"/>
</dbReference>
<dbReference type="NCBIfam" id="NF003717">
    <property type="entry name" value="PRK05327.1"/>
    <property type="match status" value="1"/>
</dbReference>
<dbReference type="NCBIfam" id="TIGR01017">
    <property type="entry name" value="rpsD_bact"/>
    <property type="match status" value="1"/>
</dbReference>
<dbReference type="PANTHER" id="PTHR11831">
    <property type="entry name" value="30S 40S RIBOSOMAL PROTEIN"/>
    <property type="match status" value="1"/>
</dbReference>
<dbReference type="PANTHER" id="PTHR11831:SF4">
    <property type="entry name" value="SMALL RIBOSOMAL SUBUNIT PROTEIN US4M"/>
    <property type="match status" value="1"/>
</dbReference>
<dbReference type="Pfam" id="PF00163">
    <property type="entry name" value="Ribosomal_S4"/>
    <property type="match status" value="1"/>
</dbReference>
<dbReference type="Pfam" id="PF01479">
    <property type="entry name" value="S4"/>
    <property type="match status" value="1"/>
</dbReference>
<dbReference type="SMART" id="SM01390">
    <property type="entry name" value="Ribosomal_S4"/>
    <property type="match status" value="1"/>
</dbReference>
<dbReference type="SMART" id="SM00363">
    <property type="entry name" value="S4"/>
    <property type="match status" value="1"/>
</dbReference>
<dbReference type="SUPFAM" id="SSF55174">
    <property type="entry name" value="Alpha-L RNA-binding motif"/>
    <property type="match status" value="1"/>
</dbReference>
<dbReference type="PROSITE" id="PS00632">
    <property type="entry name" value="RIBOSOMAL_S4"/>
    <property type="match status" value="1"/>
</dbReference>
<dbReference type="PROSITE" id="PS50889">
    <property type="entry name" value="S4"/>
    <property type="match status" value="1"/>
</dbReference>
<evidence type="ECO:0000255" key="1">
    <source>
        <dbReference type="HAMAP-Rule" id="MF_01306"/>
    </source>
</evidence>
<evidence type="ECO:0000305" key="2"/>
<gene>
    <name evidence="1" type="primary">rpsD</name>
    <name type="ordered locus">E2348C_3559</name>
</gene>
<name>RS4_ECO27</name>
<proteinExistence type="inferred from homology"/>
<comment type="function">
    <text evidence="1">One of the primary rRNA binding proteins, it binds directly to 16S rRNA where it nucleates assembly of the body of the 30S subunit.</text>
</comment>
<comment type="function">
    <text evidence="1">With S5 and S12 plays an important role in translational accuracy.</text>
</comment>
<comment type="subunit">
    <text evidence="1">Part of the 30S ribosomal subunit. Contacts protein S5. The interaction surface between S4 and S5 is involved in control of translational fidelity.</text>
</comment>
<comment type="similarity">
    <text evidence="1">Belongs to the universal ribosomal protein uS4 family.</text>
</comment>
<reference key="1">
    <citation type="journal article" date="2009" name="J. Bacteriol.">
        <title>Complete genome sequence and comparative genome analysis of enteropathogenic Escherichia coli O127:H6 strain E2348/69.</title>
        <authorList>
            <person name="Iguchi A."/>
            <person name="Thomson N.R."/>
            <person name="Ogura Y."/>
            <person name="Saunders D."/>
            <person name="Ooka T."/>
            <person name="Henderson I.R."/>
            <person name="Harris D."/>
            <person name="Asadulghani M."/>
            <person name="Kurokawa K."/>
            <person name="Dean P."/>
            <person name="Kenny B."/>
            <person name="Quail M.A."/>
            <person name="Thurston S."/>
            <person name="Dougan G."/>
            <person name="Hayashi T."/>
            <person name="Parkhill J."/>
            <person name="Frankel G."/>
        </authorList>
    </citation>
    <scope>NUCLEOTIDE SEQUENCE [LARGE SCALE GENOMIC DNA]</scope>
    <source>
        <strain>E2348/69 / EPEC</strain>
    </source>
</reference>
<protein>
    <recommendedName>
        <fullName evidence="1">Small ribosomal subunit protein uS4</fullName>
    </recommendedName>
    <alternativeName>
        <fullName evidence="2">30S ribosomal protein S4</fullName>
    </alternativeName>
</protein>
<accession>B7UK20</accession>
<keyword id="KW-1185">Reference proteome</keyword>
<keyword id="KW-0687">Ribonucleoprotein</keyword>
<keyword id="KW-0689">Ribosomal protein</keyword>
<keyword id="KW-0694">RNA-binding</keyword>
<keyword id="KW-0699">rRNA-binding</keyword>
<feature type="chain" id="PRO_1000165401" description="Small ribosomal subunit protein uS4">
    <location>
        <begin position="1"/>
        <end position="206"/>
    </location>
</feature>
<feature type="domain" description="S4 RNA-binding" evidence="1">
    <location>
        <begin position="96"/>
        <end position="156"/>
    </location>
</feature>
<organism>
    <name type="scientific">Escherichia coli O127:H6 (strain E2348/69 / EPEC)</name>
    <dbReference type="NCBI Taxonomy" id="574521"/>
    <lineage>
        <taxon>Bacteria</taxon>
        <taxon>Pseudomonadati</taxon>
        <taxon>Pseudomonadota</taxon>
        <taxon>Gammaproteobacteria</taxon>
        <taxon>Enterobacterales</taxon>
        <taxon>Enterobacteriaceae</taxon>
        <taxon>Escherichia</taxon>
    </lineage>
</organism>
<sequence length="206" mass="23469">MARYLGPKLKLSRREGTDLFLKSGVRAIDTKCKIEQAPGQHGARKPRLSDYGVQLREKQKVRRIYGVLERQFRNYYKEAARLKGNTGENLLALLEGRLDNVVYRMGFGATRAEARQLVSHKAIMVNGRVVNIASYQVSPNDVVSIREKAKKQSRVKAALELAEQREKPTWLEVDAGKMEGTFKRKPERSDLSADINEHLIVELYSK</sequence>